<organismHost>
    <name type="scientific">Ornithodoros</name>
    <name type="common">relapsing fever ticks</name>
    <dbReference type="NCBI Taxonomy" id="6937"/>
</organismHost>
<organismHost>
    <name type="scientific">Phacochoerus aethiopicus</name>
    <name type="common">Warthog</name>
    <dbReference type="NCBI Taxonomy" id="85517"/>
</organismHost>
<organismHost>
    <name type="scientific">Phacochoerus africanus</name>
    <name type="common">Warthog</name>
    <dbReference type="NCBI Taxonomy" id="41426"/>
</organismHost>
<organismHost>
    <name type="scientific">Potamochoerus larvatus</name>
    <name type="common">Bushpig</name>
    <dbReference type="NCBI Taxonomy" id="273792"/>
</organismHost>
<organismHost>
    <name type="scientific">Sus scrofa</name>
    <name type="common">Pig</name>
    <dbReference type="NCBI Taxonomy" id="9823"/>
</organismHost>
<evidence type="ECO:0000305" key="1"/>
<sequence>MSFSECPLVISACKKFLQKRITIENEALINALITALAQTNTLNDLCLLPIQTYLLSYKNAFEWIHFVCIAITTILDSKYNWKDCTVDINYIFLHVTYIYTIKTKEYLDYCS</sequence>
<dbReference type="EMBL" id="X71982">
    <property type="protein sequence ID" value="CAA50844.1"/>
    <property type="molecule type" value="Genomic_DNA"/>
</dbReference>
<dbReference type="EMBL" id="AY261361">
    <property type="status" value="NOT_ANNOTATED_CDS"/>
    <property type="molecule type" value="Genomic_DNA"/>
</dbReference>
<dbReference type="Proteomes" id="UP000000860">
    <property type="component" value="Segment"/>
</dbReference>
<reference key="1">
    <citation type="journal article" date="1994" name="J. Gen. Virol.">
        <title>Nucleotide sequence of a 55 kbp region from the right end of the genome of a pathogenic African swine fever virus isolate (Malawi LIL20/1).</title>
        <authorList>
            <person name="Dixon L.K."/>
            <person name="Twigg S.R.F."/>
            <person name="Baylis S.A."/>
            <person name="Vydelingum S."/>
            <person name="Bristow C."/>
            <person name="Hammond J.M."/>
            <person name="Smith G.L."/>
        </authorList>
    </citation>
    <scope>NUCLEOTIDE SEQUENCE [GENOMIC DNA]</scope>
</reference>
<reference key="2">
    <citation type="submission" date="2003-03" db="EMBL/GenBank/DDBJ databases">
        <title>African swine fever virus genomes.</title>
        <authorList>
            <person name="Kutish G.F."/>
            <person name="Rock D.L."/>
        </authorList>
    </citation>
    <scope>NUCLEOTIDE SEQUENCE [LARGE SCALE GENOMIC DNA]</scope>
</reference>
<accession>Q65248</accession>
<name>VF111_ASFM2</name>
<proteinExistence type="inferred from homology"/>
<comment type="similarity">
    <text evidence="1">Belongs to the asfivirus E111R family.</text>
</comment>
<gene>
    <name type="ordered locus">Mal-143</name>
    <name type="ORF">k6R</name>
</gene>
<protein>
    <recommendedName>
        <fullName>Uncharacterized protein E111R</fullName>
        <shortName>pE111R</shortName>
    </recommendedName>
</protein>
<feature type="chain" id="PRO_0000373477" description="Uncharacterized protein E111R">
    <location>
        <begin position="1"/>
        <end position="111"/>
    </location>
</feature>
<organism>
    <name type="scientific">African swine fever virus (isolate Tick/Malawi/Lil 20-1/1983)</name>
    <name type="common">ASFV</name>
    <dbReference type="NCBI Taxonomy" id="10500"/>
    <lineage>
        <taxon>Viruses</taxon>
        <taxon>Varidnaviria</taxon>
        <taxon>Bamfordvirae</taxon>
        <taxon>Nucleocytoviricota</taxon>
        <taxon>Pokkesviricetes</taxon>
        <taxon>Asfuvirales</taxon>
        <taxon>Asfarviridae</taxon>
        <taxon>Asfivirus</taxon>
        <taxon>African swine fever virus</taxon>
    </lineage>
</organism>